<keyword id="KW-0025">Alternative splicing</keyword>
<keyword id="KW-0325">Glycoprotein</keyword>
<keyword id="KW-1185">Reference proteome</keyword>
<keyword id="KW-0677">Repeat</keyword>
<keyword id="KW-0964">Secreted</keyword>
<keyword id="KW-0732">Signal</keyword>
<dbReference type="EMBL" id="AF004842">
    <property type="protein sequence ID" value="AAD01205.1"/>
    <property type="molecule type" value="mRNA"/>
</dbReference>
<dbReference type="EMBL" id="GU339164">
    <property type="protein sequence ID" value="ADB96941.1"/>
    <property type="molecule type" value="mRNA"/>
</dbReference>
<dbReference type="RefSeq" id="NP_001011599.1">
    <molecule id="O97432-1"/>
    <property type="nucleotide sequence ID" value="NM_001011599.1"/>
</dbReference>
<dbReference type="SMR" id="O97432"/>
<dbReference type="GlyCosmos" id="O97432">
    <property type="glycosylation" value="4 sites, No reported glycans"/>
</dbReference>
<dbReference type="PaxDb" id="7460-GB55208-PA"/>
<dbReference type="EnsemblMetazoa" id="NM_001011599">
    <molecule id="O97432-1"/>
    <property type="protein sequence ID" value="NP_001011599"/>
    <property type="gene ID" value="GeneID_406116"/>
</dbReference>
<dbReference type="GeneID" id="406116"/>
<dbReference type="KEGG" id="ame:406116"/>
<dbReference type="CTD" id="406116"/>
<dbReference type="eggNOG" id="ENOG502SCJK">
    <property type="taxonomic scope" value="Eukaryota"/>
</dbReference>
<dbReference type="InParanoid" id="O97432"/>
<dbReference type="OrthoDB" id="164141at7399"/>
<dbReference type="PhylomeDB" id="O97432"/>
<dbReference type="Proteomes" id="UP000005203">
    <property type="component" value="Linkage group LG11"/>
</dbReference>
<dbReference type="GO" id="GO:0005576">
    <property type="term" value="C:extracellular region"/>
    <property type="evidence" value="ECO:0007669"/>
    <property type="project" value="UniProtKB-KW"/>
</dbReference>
<dbReference type="Gene3D" id="2.120.10.30">
    <property type="entry name" value="TolB, C-terminal domain"/>
    <property type="match status" value="2"/>
</dbReference>
<dbReference type="InterPro" id="IPR011042">
    <property type="entry name" value="6-blade_b-propeller_TolB-like"/>
</dbReference>
<dbReference type="InterPro" id="IPR017996">
    <property type="entry name" value="Royal_jelly/protein_yellow"/>
</dbReference>
<dbReference type="PANTHER" id="PTHR10009:SF7">
    <property type="entry name" value="GH10609P-RELATED"/>
    <property type="match status" value="1"/>
</dbReference>
<dbReference type="PANTHER" id="PTHR10009">
    <property type="entry name" value="PROTEIN YELLOW-RELATED"/>
    <property type="match status" value="1"/>
</dbReference>
<dbReference type="Pfam" id="PF03022">
    <property type="entry name" value="MRJP"/>
    <property type="match status" value="2"/>
</dbReference>
<dbReference type="PRINTS" id="PR01366">
    <property type="entry name" value="ROYALJELLY"/>
</dbReference>
<dbReference type="SUPFAM" id="SSF63825">
    <property type="entry name" value="YWTD domain"/>
    <property type="match status" value="1"/>
</dbReference>
<reference key="1">
    <citation type="journal article" date="1999" name="J. Mol. Evol.">
        <title>The family of major royal jelly proteins and its evolution.</title>
        <authorList>
            <person name="Albert S."/>
            <person name="Bhattacharya D."/>
            <person name="Klaudiny J."/>
            <person name="Schmitzova J."/>
            <person name="Simuth J."/>
        </authorList>
    </citation>
    <scope>NUCLEOTIDE SEQUENCE [MRNA]</scope>
    <source>
        <tissue>Head</tissue>
    </source>
</reference>
<reference evidence="10" key="2">
    <citation type="submission" date="2009-12" db="EMBL/GenBank/DDBJ databases">
        <title>Over-expresson of Major Royal Jelly Protein 5 from Apis mellifera in E.coli.</title>
        <authorList>
            <person name="Yoon B.S."/>
            <person name="Nguyen K.T."/>
        </authorList>
    </citation>
    <scope>NUCLEOTIDE SEQUENCE [MRNA]</scope>
</reference>
<reference key="3">
    <citation type="submission" date="2024-08" db="UniProtKB">
        <authorList>
            <consortium name="RefSeq"/>
        </authorList>
    </citation>
    <scope>NUCLEOTIDE SEQUENCE [LARGE SCALE GENOMIC DNA]</scope>
    <source>
        <strain>DH4</strain>
    </source>
</reference>
<reference key="4">
    <citation type="journal article" date="2004" name="J. Insect Physiol.">
        <title>The MRJP/YELLOW protein family of Apis mellifera: identification of new members in the EST library.</title>
        <authorList>
            <person name="Albert S."/>
            <person name="Klaudiny J."/>
        </authorList>
    </citation>
    <scope>NUCLEOTIDE SEQUENCE [MRNA] OF 222-475</scope>
</reference>
<reference key="5">
    <citation type="journal article" date="1998" name="Cell. Mol. Life Sci.">
        <title>A family of major royal jelly proteins of the honeybee Apis mellifera L.</title>
        <authorList>
            <person name="Schmitzova J."/>
            <person name="Klaudiny J."/>
            <person name="Albert S."/>
            <person name="Schroeder W."/>
            <person name="Schreckengost W."/>
            <person name="Hanes J."/>
            <person name="Judova J."/>
            <person name="Simuth J."/>
        </authorList>
    </citation>
    <scope>FUNCTION</scope>
</reference>
<reference key="6">
    <citation type="journal article" date="2005" name="Insect Biochem. Mol. Biol.">
        <title>Profiling the proteome complement of the secretion from hypopharyngeal gland of Africanized nurse-honeybees (Apis mellifera L.).</title>
        <authorList>
            <person name="Santos K.S."/>
            <person name="dos Santos L.D."/>
            <person name="Mendes M.A."/>
            <person name="de Souza B.M."/>
            <person name="Malaspina O."/>
            <person name="Palma M.S."/>
        </authorList>
    </citation>
    <scope>FUNCTION</scope>
    <scope>SUBCELLULAR LOCATION</scope>
    <scope>TISSUE SPECIFICITY</scope>
</reference>
<reference key="7">
    <citation type="journal article" date="2006" name="Genome Res.">
        <title>Evolution of the Yellow/Major Royal Jelly Protein family and the emergence of social behavior in honey bees.</title>
        <authorList>
            <person name="Drapeau M.D."/>
            <person name="Albert S."/>
            <person name="Kucharski R."/>
            <person name="Prusko C."/>
            <person name="Maleszka R."/>
        </authorList>
    </citation>
    <scope>IDENTIFICATION</scope>
    <scope>TISSUE SPECIFICITY</scope>
</reference>
<reference key="8">
    <citation type="journal article" date="2018" name="Insects">
        <title>Transcriptional Control of Honey Bee (Apis mellifera) Major Royal Jelly Proteins by 20-Hydroxyecdysone.</title>
        <authorList>
            <person name="Winkler P."/>
            <person name="Sieg F."/>
            <person name="Buttstedt A."/>
        </authorList>
    </citation>
    <scope>ABSCENCE OF INDUCTION BY 20-HYDROXYECDYSONE</scope>
</reference>
<reference key="9">
    <citation type="journal article" date="2019" name="Ecol. Evol.">
        <title>The rise and fall of major royal jelly proteins during a honeybee (Apis mellifera) workers' life.</title>
        <authorList>
            <person name="Dobritzsch D."/>
            <person name="Aumer D."/>
            <person name="Fuszard M."/>
            <person name="Erler S."/>
            <person name="Buttstedt A."/>
        </authorList>
    </citation>
    <scope>FUNCTION</scope>
    <scope>SUBCELLULAR LOCATION</scope>
    <scope>TISSUE SPECIFICITY</scope>
</reference>
<reference key="10">
    <citation type="journal article" date="2021" name="Insects">
        <title>Upregulation of Transferrin and Major Royal Jelly Proteins in the Spermathecal Fluid of Mated Honeybee (Apis mellifera) Queens.</title>
        <authorList>
            <person name="Park H.G."/>
            <person name="Kim B.Y."/>
            <person name="Kim J.M."/>
            <person name="Choi Y.S."/>
            <person name="Yoon H.J."/>
            <person name="Lee K.S."/>
            <person name="Jin B.R."/>
        </authorList>
    </citation>
    <scope>FUNCTION</scope>
    <scope>TISSUE SPECIFICITY</scope>
</reference>
<protein>
    <recommendedName>
        <fullName>Major royal jelly protein 5</fullName>
    </recommendedName>
    <alternativeName>
        <fullName>Bee-milk protein</fullName>
    </alternativeName>
</protein>
<organism>
    <name type="scientific">Apis mellifera</name>
    <name type="common">Honeybee</name>
    <dbReference type="NCBI Taxonomy" id="7460"/>
    <lineage>
        <taxon>Eukaryota</taxon>
        <taxon>Metazoa</taxon>
        <taxon>Ecdysozoa</taxon>
        <taxon>Arthropoda</taxon>
        <taxon>Hexapoda</taxon>
        <taxon>Insecta</taxon>
        <taxon>Pterygota</taxon>
        <taxon>Neoptera</taxon>
        <taxon>Endopterygota</taxon>
        <taxon>Hymenoptera</taxon>
        <taxon>Apocrita</taxon>
        <taxon>Aculeata</taxon>
        <taxon>Apoidea</taxon>
        <taxon>Anthophila</taxon>
        <taxon>Apidae</taxon>
        <taxon>Apis</taxon>
    </lineage>
</organism>
<comment type="function">
    <text evidence="2 5 6 7 9">Component of royal jelly, a substance produced in the hypopharyngeal gland containing proteins, free amino acids, fatty acids, sugars and other nutrients, which is fed to developing larvae by worker nurse bees (PubMed:15607658, PubMed:31410279, PubMed:9791542). Major royal jelly proteins (MRJPs) are high in essential amino acids and probably have a nutritional function in larval food (PubMed:9791542). All larvae are fed some royal jelly (also known as worker jelly) early in their development but it forms the principal source of nutrition for larvae destined to become queen bees (Probable). Produced in the spermatheca of adult queen bees, along with other major royal jelly proteins, where it may act as a nutrient supply for sperm stored by mated queens, or be involved in energy metabolism (PubMed:34442256).</text>
</comment>
<comment type="subcellular location">
    <subcellularLocation>
        <location evidence="2 5">Secreted</location>
    </subcellularLocation>
    <text evidence="2 5">Royal jelly.</text>
</comment>
<comment type="alternative products">
    <event type="alternative splicing"/>
    <isoform>
        <id>O97432-1</id>
        <name evidence="9">1</name>
        <sequence type="displayed"/>
    </isoform>
    <isoform>
        <id>O97432-2</id>
        <name evidence="9">2</name>
        <name evidence="9">X1</name>
        <sequence type="described" ref="VSP_062533 VSP_062534"/>
    </isoform>
</comment>
<comment type="tissue specificity">
    <text evidence="2 3 5 6">Found in and secreted from the hypopharyngeal glands of the worker honey bee (at protein level); expression peaks at 8 days post eclosion (PubMed:15607658). Expressed in the brains of adult worker bees peaking at 12 days post eclosion (at protein level) (PubMed:31410279). Expressed in the spermatheca of adult queen bees (at protein level); Expression levels are higher in mated queens than in virgin queens (PubMed:34442256). Expressed in the heads of worker bees after eclosion, expression dropping with age and detectable up to 26 days of age (PubMed:17065613).</text>
</comment>
<comment type="developmental stage">
    <text>Produced by the cephalic glandular system of the nurse honey bee.</text>
</comment>
<comment type="induction">
    <text evidence="4">Unlike other major royal jelly proteins, not down-regulated by the ecdysteroid 20-hydroxyecdysone (ecdysterone or 20E).</text>
</comment>
<comment type="similarity">
    <text evidence="9">Belongs to the major royal jelly protein family.</text>
</comment>
<evidence type="ECO:0000255" key="1"/>
<evidence type="ECO:0000269" key="2">
    <source>
    </source>
</evidence>
<evidence type="ECO:0000269" key="3">
    <source>
    </source>
</evidence>
<evidence type="ECO:0000269" key="4">
    <source>
    </source>
</evidence>
<evidence type="ECO:0000269" key="5">
    <source>
    </source>
</evidence>
<evidence type="ECO:0000269" key="6">
    <source>
    </source>
</evidence>
<evidence type="ECO:0000269" key="7">
    <source>
    </source>
</evidence>
<evidence type="ECO:0000303" key="8">
    <source>
    </source>
</evidence>
<evidence type="ECO:0000305" key="9"/>
<evidence type="ECO:0000312" key="10">
    <source>
        <dbReference type="EMBL" id="ADB96941.1"/>
    </source>
</evidence>
<proteinExistence type="evidence at protein level"/>
<sequence>MTTWLLLVVCLGIACQGITSVTVRENSPRKLANSMNVIHEWKYLDYDFGSDERRQAAMQSGEYDHTKNYPFDVDQWRGMTFVTVPRYKGVPSSLNVISEKIGNGGRLLQPYPDWSWANYKDCSGIVSAYKIAIDKFDRLWILDSGIINNTQPMCSPKLHVFDLNTSHQLKQVVMPHDIAVNASTGNGGLVSLVVQAMDPVNTIVYMADDKGDALIVYQNSDESFHRLTSNTFDYDPKYIKMMDAGESFTAQDGIFGMALSPMTNNLYYSPLSSRSLYYVNTKPFMKSEYGANNVQYQGVQDIFNTESIAKIMSKNGVLFFGLMNNSAIGCWNEHQPLQRENMDMVAQNEETLQTVVAMKMMHLPQSNKMNRMHRMNRVNRVNRMDRMDRIDRMDRMDRMDTMDTMDRIDRMDRMDRIDRIDRMHTMDTMDTMDRTDKMSSMDRMDRMDRVDRMDTMDRTDKMSSMDRMDRMDRVDTMDTMDTMDRMDRMDRMDRMDRMDRMDTMDRTDKMSRIDRMDKIDRMDRMDRTNRMDRMNRMNRQMNEYMMALSMKLQKFINNDYNFNEVNFRILGANVNDLIMNTRCANSDNQNNNQNKHNN</sequence>
<accession>O97432</accession>
<accession>A0A7M7MQN8</accession>
<accession>A0A8B8H5N6</accession>
<accession>D3JZ08</accession>
<feature type="signal peptide" evidence="1">
    <location>
        <begin position="1"/>
        <end position="17"/>
    </location>
</feature>
<feature type="chain" id="PRO_0000031047" description="Major royal jelly protein 5">
    <location>
        <begin position="18"/>
        <end position="598"/>
    </location>
</feature>
<feature type="glycosylation site" description="N-linked (GlcNAc...) asparagine" evidence="1">
    <location>
        <position position="148"/>
    </location>
</feature>
<feature type="glycosylation site" description="N-linked (GlcNAc...) asparagine" evidence="1">
    <location>
        <position position="164"/>
    </location>
</feature>
<feature type="glycosylation site" description="N-linked (GlcNAc...) asparagine" evidence="1">
    <location>
        <position position="181"/>
    </location>
</feature>
<feature type="glycosylation site" description="N-linked (GlcNAc...) asparagine" evidence="1">
    <location>
        <position position="324"/>
    </location>
</feature>
<feature type="splice variant" id="VSP_062533" description="In isoform 2.">
    <original>EETLQTVVAMKMMHLP</original>
    <variation>KKTLQMIISMKILKDL</variation>
    <location>
        <begin position="349"/>
        <end position="364"/>
    </location>
</feature>
<feature type="splice variant" id="VSP_062534" description="In isoform 2.">
    <location>
        <begin position="365"/>
        <end position="598"/>
    </location>
</feature>
<feature type="sequence conflict" description="In Ref. 2; ADB96941 and 3." evidence="9" ref="2 3">
    <original>M</original>
    <variation>I</variation>
    <location>
        <position position="58"/>
    </location>
</feature>
<feature type="sequence conflict" description="In Ref. 2; ADB96941 and 3." evidence="9" ref="2 3">
    <original>E</original>
    <variation>K</variation>
    <location>
        <position position="99"/>
    </location>
</feature>
<feature type="sequence conflict" description="In Ref. 3; XP_026299316." evidence="9" ref="3">
    <original>H</original>
    <variation>Q</variation>
    <location>
        <position position="167"/>
    </location>
</feature>
<feature type="sequence conflict" description="In Ref. 3; XP_026299316." evidence="9" ref="3">
    <original>A</original>
    <variation>T</variation>
    <location>
        <position position="179"/>
    </location>
</feature>
<feature type="sequence conflict" description="In Ref. 2; ADB96941 and 3." evidence="9" ref="2 3">
    <original>N</original>
    <variation>M</variation>
    <location>
        <position position="186"/>
    </location>
</feature>
<feature type="sequence conflict" description="In Ref. 2; ADB96941, 3 and 4." evidence="9" ref="2 3 4">
    <original>E</original>
    <variation>D</variation>
    <location>
        <position position="222"/>
    </location>
</feature>
<feature type="sequence conflict" description="In Ref. 2; ADB96941, 3 and 4." evidence="9" ref="2 3 4">
    <original>D</original>
    <variation>A</variation>
    <location>
        <position position="243"/>
    </location>
</feature>
<feature type="sequence conflict" description="In Ref. 3; XP_026299316." evidence="9" ref="3">
    <original>Q</original>
    <variation>K</variation>
    <location>
        <position position="251"/>
    </location>
</feature>
<feature type="sequence conflict" description="In Ref. 2; ADB96941." evidence="9" ref="2">
    <original>H</original>
    <variation>D</variation>
    <location>
        <position position="424"/>
    </location>
</feature>
<feature type="sequence conflict" description="In Ref. 2; ADB96941." evidence="9" ref="2">
    <original>K</original>
    <variation>R</variation>
    <location>
        <position position="518"/>
    </location>
</feature>
<gene>
    <name evidence="8" type="primary">Mrjp5</name>
    <name type="synonym">GB10622</name>
</gene>
<name>MRJP5_APIME</name>